<keyword id="KW-0878">Amphibian defense peptide</keyword>
<keyword id="KW-0044">Antibiotic</keyword>
<keyword id="KW-0929">Antimicrobial</keyword>
<keyword id="KW-0903">Direct protein sequencing</keyword>
<keyword id="KW-1015">Disulfide bond</keyword>
<keyword id="KW-0964">Secreted</keyword>
<feature type="peptide" id="PRO_0000043807" description="Japonicin-2">
    <location>
        <begin position="1"/>
        <end position="21"/>
    </location>
</feature>
<feature type="disulfide bond" evidence="1">
    <location>
        <begin position="14"/>
        <end position="21"/>
    </location>
</feature>
<accession>P83306</accession>
<organism evidence="3">
    <name type="scientific">Rana japonica</name>
    <name type="common">Japanese reddish frog</name>
    <dbReference type="NCBI Taxonomy" id="8402"/>
    <lineage>
        <taxon>Eukaryota</taxon>
        <taxon>Metazoa</taxon>
        <taxon>Chordata</taxon>
        <taxon>Craniata</taxon>
        <taxon>Vertebrata</taxon>
        <taxon>Euteleostomi</taxon>
        <taxon>Amphibia</taxon>
        <taxon>Batrachia</taxon>
        <taxon>Anura</taxon>
        <taxon>Neobatrachia</taxon>
        <taxon>Ranoidea</taxon>
        <taxon>Ranidae</taxon>
        <taxon>Rana</taxon>
        <taxon>Rana</taxon>
    </lineage>
</organism>
<protein>
    <recommendedName>
        <fullName>Japonicin-2</fullName>
    </recommendedName>
</protein>
<sequence>FGLPMLSILPKALCILLKRKC</sequence>
<reference evidence="3" key="1">
    <citation type="journal article" date="2002" name="Peptides">
        <title>Antimicrobial peptides with atypical structural features from the skin of the Japanese brown frog Rana japonica.</title>
        <authorList>
            <person name="Isaacson T."/>
            <person name="Soto A."/>
            <person name="Iwamuro S."/>
            <person name="Knoop F.C."/>
            <person name="Conlon J.M."/>
        </authorList>
    </citation>
    <scope>PROTEIN SEQUENCE</scope>
    <scope>FUNCTION</scope>
    <scope>MASS SPECTROMETRY</scope>
    <source>
        <tissue>Skin secretion</tissue>
    </source>
</reference>
<dbReference type="GO" id="GO:0005576">
    <property type="term" value="C:extracellular region"/>
    <property type="evidence" value="ECO:0007669"/>
    <property type="project" value="UniProtKB-SubCell"/>
</dbReference>
<dbReference type="GO" id="GO:0016999">
    <property type="term" value="P:antibiotic metabolic process"/>
    <property type="evidence" value="ECO:0000314"/>
    <property type="project" value="UniProtKB"/>
</dbReference>
<dbReference type="GO" id="GO:0050829">
    <property type="term" value="P:defense response to Gram-negative bacterium"/>
    <property type="evidence" value="ECO:0000314"/>
    <property type="project" value="UniProtKB"/>
</dbReference>
<dbReference type="GO" id="GO:0050830">
    <property type="term" value="P:defense response to Gram-positive bacterium"/>
    <property type="evidence" value="ECO:0000314"/>
    <property type="project" value="UniProtKB"/>
</dbReference>
<evidence type="ECO:0000250" key="1"/>
<evidence type="ECO:0000269" key="2">
    <source>
    </source>
</evidence>
<evidence type="ECO:0000305" key="3"/>
<name>JAP2_RANJA</name>
<proteinExistence type="evidence at protein level"/>
<comment type="function">
    <text evidence="2">Antibacterial activity against the Gram-negative bacterium E.coli and the Gram-positive bacterium S.aureus.</text>
</comment>
<comment type="subcellular location">
    <subcellularLocation>
        <location>Secreted</location>
    </subcellularLocation>
</comment>
<comment type="tissue specificity">
    <text>Expressed by the skin glands.</text>
</comment>
<comment type="mass spectrometry"/>